<organism>
    <name type="scientific">Xenopus laevis</name>
    <name type="common">African clawed frog</name>
    <dbReference type="NCBI Taxonomy" id="8355"/>
    <lineage>
        <taxon>Eukaryota</taxon>
        <taxon>Metazoa</taxon>
        <taxon>Chordata</taxon>
        <taxon>Craniata</taxon>
        <taxon>Vertebrata</taxon>
        <taxon>Euteleostomi</taxon>
        <taxon>Amphibia</taxon>
        <taxon>Batrachia</taxon>
        <taxon>Anura</taxon>
        <taxon>Pipoidea</taxon>
        <taxon>Pipidae</taxon>
        <taxon>Xenopodinae</taxon>
        <taxon>Xenopus</taxon>
        <taxon>Xenopus</taxon>
    </lineage>
</organism>
<comment type="function">
    <text evidence="3 7">mRNA-binding protein required for maternal mRNA storage, translation and degradation during oocyte maturation (PubMed:22732570). Probably promotes formation of some phase-separated membraneless compartment that stores maternal mRNAs in oocytes: acts by undergoing liquid-liquid phase separation upon binding to maternal mRNAs (By similarity). Binds to the 3'-UTR of maternal mRNAs, inhibiting their translation (PubMed:22732570).</text>
</comment>
<comment type="subcellular location">
    <subcellularLocation>
        <location evidence="1">Cytoplasm</location>
        <location evidence="1">Cytoplasmic ribonucleoprotein granule</location>
    </subcellularLocation>
</comment>
<comment type="tissue specificity">
    <text evidence="6 7">Oocyte-specific.</text>
</comment>
<comment type="developmental stage">
    <text evidence="6 7">Expressed maternally and maintains its level until stage 10 of oogenesis (PubMed:19371384). Expression decreases significantly around stage 12, during oocyte maturation (at protein level) (PubMed:19371384, PubMed:22732570).</text>
</comment>
<comment type="domain">
    <text evidence="3">Disordered regions undergo liquid-liquid phase separation (LLPS) for the formation of membraneless compartments that store maternal mRNAs in oocytes.</text>
</comment>
<comment type="domain">
    <text evidence="2">The 3CxxC-type mediates binding to the 3'-UTR of mRNAs.</text>
</comment>
<comment type="similarity">
    <text evidence="10">Belongs to the ZAR1 family.</text>
</comment>
<gene>
    <name evidence="11" type="primary">zar2.S</name>
    <name evidence="9" type="synonym">zar2a</name>
</gene>
<reference key="1">
    <citation type="journal article" date="2009" name="Genes Cells">
        <title>Expression cloning of Xenopus zygote arrest 2 (Xzar2) as a novel epidermalization-promoting factor in early embryos of Xenopus laevis.</title>
        <authorList>
            <person name="Nakajima Y."/>
            <person name="Okamoto H."/>
            <person name="Kubo T."/>
        </authorList>
    </citation>
    <scope>NUCLEOTIDE SEQUENCE [MRNA]</scope>
    <scope>TISSUE SPECIFICITY</scope>
    <scope>DEVELOPMENTAL STAGE</scope>
</reference>
<reference key="2">
    <citation type="journal article" date="2016" name="Nature">
        <title>Genome evolution in the allotetraploid frog Xenopus laevis.</title>
        <authorList>
            <person name="Session A.M."/>
            <person name="Uno Y."/>
            <person name="Kwon T."/>
            <person name="Chapman J.A."/>
            <person name="Toyoda A."/>
            <person name="Takahashi S."/>
            <person name="Fukui A."/>
            <person name="Hikosaka A."/>
            <person name="Suzuki A."/>
            <person name="Kondo M."/>
            <person name="van Heeringen S.J."/>
            <person name="Quigley I."/>
            <person name="Heinz S."/>
            <person name="Ogino H."/>
            <person name="Ochi H."/>
            <person name="Hellsten U."/>
            <person name="Lyons J.B."/>
            <person name="Simakov O."/>
            <person name="Putnam N."/>
            <person name="Stites J."/>
            <person name="Kuroki Y."/>
            <person name="Tanaka T."/>
            <person name="Michiue T."/>
            <person name="Watanabe M."/>
            <person name="Bogdanovic O."/>
            <person name="Lister R."/>
            <person name="Georgiou G."/>
            <person name="Paranjpe S.S."/>
            <person name="van Kruijsbergen I."/>
            <person name="Shu S."/>
            <person name="Carlson J."/>
            <person name="Kinoshita T."/>
            <person name="Ohta Y."/>
            <person name="Mawaribuchi S."/>
            <person name="Jenkins J."/>
            <person name="Grimwood J."/>
            <person name="Schmutz J."/>
            <person name="Mitros T."/>
            <person name="Mozaffari S.V."/>
            <person name="Suzuki Y."/>
            <person name="Haramoto Y."/>
            <person name="Yamamoto T.S."/>
            <person name="Takagi C."/>
            <person name="Heald R."/>
            <person name="Miller K."/>
            <person name="Haudenschild C."/>
            <person name="Kitzman J."/>
            <person name="Nakayama T."/>
            <person name="Izutsu Y."/>
            <person name="Robert J."/>
            <person name="Fortriede J."/>
            <person name="Burns K."/>
            <person name="Lotay V."/>
            <person name="Karimi K."/>
            <person name="Yasuoka Y."/>
            <person name="Dichmann D.S."/>
            <person name="Flajnik M.F."/>
            <person name="Houston D.W."/>
            <person name="Shendure J."/>
            <person name="DuPasquier L."/>
            <person name="Vize P.D."/>
            <person name="Zorn A.M."/>
            <person name="Ito M."/>
            <person name="Marcotte E.M."/>
            <person name="Wallingford J.B."/>
            <person name="Ito Y."/>
            <person name="Asashima M."/>
            <person name="Ueno N."/>
            <person name="Matsuda Y."/>
            <person name="Veenstra G.J."/>
            <person name="Fujiyama A."/>
            <person name="Harland R.M."/>
            <person name="Taira M."/>
            <person name="Rokhsar D.S."/>
        </authorList>
    </citation>
    <scope>NUCLEOTIDE SEQUENCE [LARGE SCALE GENOMIC DNA]</scope>
    <source>
        <strain>J</strain>
    </source>
</reference>
<reference key="3">
    <citation type="journal article" date="2012" name="Dev. Biol.">
        <title>Xenopus laevis zygote arrest 2 (zar2) encodes a zinc finger RNA-binding protein that binds to the translational control sequence in the maternal Wee1 mRNA and regulates translation.</title>
        <authorList>
            <person name="Charlesworth A."/>
            <person name="Yamamoto T.M."/>
            <person name="Cook J.M."/>
            <person name="Silva K.D."/>
            <person name="Kotter C.V."/>
            <person name="Carter G.S."/>
            <person name="Holt J.W."/>
            <person name="Lavender H.F."/>
            <person name="MacNicol A.M."/>
            <person name="Ying Wang Y."/>
            <person name="Wilczynska A."/>
        </authorList>
    </citation>
    <scope>FUNCTION</scope>
    <scope>TISSUE SPECIFICITY</scope>
    <scope>DEVELOPMENTAL STAGE</scope>
</reference>
<accession>C0SPG1</accession>
<sequence length="302" mass="34463">MAGFVYSPYNAYQGYGGNFGQNPHRPQAFPKNKQAAWKSNKSSEPPDYLDHFQRAQLKAILSQVNPNLTPRLRKVNTKEMGVQVNPRVDTGVQCSLGPRTLRRPPPPPSSPVKPTDCARFSRPVAVYSPVVDRRLFSLPQGGRLPKKSLPAPDSQSQPLKDRGPSPEEKEPETKEALEKSPVPGAEEPNEEEPNKPAFQFLEQKYGYFHCKDCKTRWESAYVWCISGSNKVYFKQLCRKCQKGFNPYRVEVIQCQVCAKTRCSCPQKKRHIDLKRPHRQELCGRCKNKKLSCDNTYSYKYIV</sequence>
<name>ZAR2A_XENLA</name>
<dbReference type="EMBL" id="CM004469">
    <property type="status" value="NOT_ANNOTATED_CDS"/>
    <property type="molecule type" value="Genomic_DNA"/>
</dbReference>
<dbReference type="EMBL" id="AB190316">
    <property type="protein sequence ID" value="BAH36746.1"/>
    <property type="molecule type" value="mRNA"/>
</dbReference>
<dbReference type="RefSeq" id="NP_001153159.1">
    <property type="nucleotide sequence ID" value="NM_001159687.1"/>
</dbReference>
<dbReference type="STRING" id="8355.C0SPG1"/>
<dbReference type="PaxDb" id="8355-C0SPG1"/>
<dbReference type="GeneID" id="100294519"/>
<dbReference type="KEGG" id="xla:100294519"/>
<dbReference type="AGR" id="Xenbase:XB-GENE-6372206"/>
<dbReference type="CTD" id="100294519"/>
<dbReference type="Xenbase" id="XB-GENE-6372206">
    <property type="gene designation" value="zar1l.S"/>
</dbReference>
<dbReference type="OMA" id="KFSCGNI"/>
<dbReference type="OrthoDB" id="9885288at2759"/>
<dbReference type="Proteomes" id="UP000186698">
    <property type="component" value="Chromosome 2S"/>
</dbReference>
<dbReference type="Proteomes" id="UP000694892">
    <property type="component" value="Chromosome 2S"/>
</dbReference>
<dbReference type="Bgee" id="100294519">
    <property type="expression patterns" value="Expressed in oocyte and 16 other cell types or tissues"/>
</dbReference>
<dbReference type="GO" id="GO:0005737">
    <property type="term" value="C:cytoplasm"/>
    <property type="evidence" value="ECO:0000318"/>
    <property type="project" value="GO_Central"/>
</dbReference>
<dbReference type="GO" id="GO:0036464">
    <property type="term" value="C:cytoplasmic ribonucleoprotein granule"/>
    <property type="evidence" value="ECO:0007669"/>
    <property type="project" value="UniProtKB-SubCell"/>
</dbReference>
<dbReference type="GO" id="GO:0003730">
    <property type="term" value="F:mRNA 3'-UTR binding"/>
    <property type="evidence" value="ECO:0000314"/>
    <property type="project" value="UniProtKB"/>
</dbReference>
<dbReference type="GO" id="GO:0008270">
    <property type="term" value="F:zinc ion binding"/>
    <property type="evidence" value="ECO:0007669"/>
    <property type="project" value="UniProtKB-KW"/>
</dbReference>
<dbReference type="GO" id="GO:0017148">
    <property type="term" value="P:negative regulation of translation"/>
    <property type="evidence" value="ECO:0000314"/>
    <property type="project" value="UniProtKB"/>
</dbReference>
<dbReference type="GO" id="GO:0001556">
    <property type="term" value="P:oocyte maturation"/>
    <property type="evidence" value="ECO:0000314"/>
    <property type="project" value="UniProtKB"/>
</dbReference>
<dbReference type="GO" id="GO:0006412">
    <property type="term" value="P:translation"/>
    <property type="evidence" value="ECO:0000318"/>
    <property type="project" value="GO_Central"/>
</dbReference>
<dbReference type="InterPro" id="IPR026775">
    <property type="entry name" value="Zar1"/>
</dbReference>
<dbReference type="InterPro" id="IPR027377">
    <property type="entry name" value="ZAR1/RTP1-5-like_Znf-3CxxC"/>
</dbReference>
<dbReference type="PANTHER" id="PTHR31054:SF5">
    <property type="entry name" value="PROTEIN ZAR1-LIKE"/>
    <property type="match status" value="1"/>
</dbReference>
<dbReference type="PANTHER" id="PTHR31054">
    <property type="entry name" value="ZYGOTE ARREST PROTEIN 1-LIKE ISOFORM X1"/>
    <property type="match status" value="1"/>
</dbReference>
<dbReference type="Pfam" id="PF13695">
    <property type="entry name" value="Zn_ribbon_3CxxC"/>
    <property type="match status" value="1"/>
</dbReference>
<dbReference type="SMART" id="SM01328">
    <property type="entry name" value="zf-3CxxC"/>
    <property type="match status" value="1"/>
</dbReference>
<protein>
    <recommendedName>
        <fullName evidence="10">Zygote arrest protein 2.S</fullName>
    </recommendedName>
    <alternativeName>
        <fullName evidence="8">Zygote arrest protein 2</fullName>
        <shortName evidence="8">Xzar2</shortName>
    </alternativeName>
    <alternativeName>
        <fullName evidence="9">Zygote arrest protein 2A</fullName>
    </alternativeName>
</protein>
<keyword id="KW-0963">Cytoplasm</keyword>
<keyword id="KW-0217">Developmental protein</keyword>
<keyword id="KW-0221">Differentiation</keyword>
<keyword id="KW-0479">Metal-binding</keyword>
<keyword id="KW-0896">Oogenesis</keyword>
<keyword id="KW-1185">Reference proteome</keyword>
<keyword id="KW-0694">RNA-binding</keyword>
<keyword id="KW-0862">Zinc</keyword>
<keyword id="KW-0863">Zinc-finger</keyword>
<proteinExistence type="evidence at protein level"/>
<evidence type="ECO:0000250" key="1">
    <source>
        <dbReference type="UniProtKB" id="C3VD30"/>
    </source>
</evidence>
<evidence type="ECO:0000250" key="2">
    <source>
        <dbReference type="UniProtKB" id="K7SGN7"/>
    </source>
</evidence>
<evidence type="ECO:0000250" key="3">
    <source>
        <dbReference type="UniProtKB" id="Q80SU3"/>
    </source>
</evidence>
<evidence type="ECO:0000255" key="4"/>
<evidence type="ECO:0000256" key="5">
    <source>
        <dbReference type="SAM" id="MobiDB-lite"/>
    </source>
</evidence>
<evidence type="ECO:0000269" key="6">
    <source>
    </source>
</evidence>
<evidence type="ECO:0000269" key="7">
    <source>
    </source>
</evidence>
<evidence type="ECO:0000303" key="8">
    <source>
    </source>
</evidence>
<evidence type="ECO:0000303" key="9">
    <source>
    </source>
</evidence>
<evidence type="ECO:0000305" key="10"/>
<evidence type="ECO:0000312" key="11">
    <source>
        <dbReference type="Xenbase" id="XB-GENE-6372206"/>
    </source>
</evidence>
<feature type="chain" id="PRO_0000457521" description="Zygote arrest protein 2.S">
    <location>
        <begin position="1"/>
        <end position="302"/>
    </location>
</feature>
<feature type="zinc finger region" description="3CxxC-type" evidence="4">
    <location>
        <begin position="203"/>
        <end position="288"/>
    </location>
</feature>
<feature type="region of interest" description="Disordered" evidence="5">
    <location>
        <begin position="15"/>
        <end position="46"/>
    </location>
</feature>
<feature type="region of interest" description="Disordered" evidence="5">
    <location>
        <begin position="88"/>
        <end position="117"/>
    </location>
</feature>
<feature type="region of interest" description="Disordered" evidence="5">
    <location>
        <begin position="138"/>
        <end position="195"/>
    </location>
</feature>
<feature type="compositionally biased region" description="Basic and acidic residues" evidence="5">
    <location>
        <begin position="159"/>
        <end position="178"/>
    </location>
</feature>